<sequence>MNLKDYIATIENYPKEGITFRDISPLMADGNAYSYAVREIVQYATDKKVDMIVGPEARGFIVGCPVAFELGIGFAPVRKPGKLPREVISADYEKEYGVDTLTMHADAIKPGQRVLIVDDLLATGGTVKATIEMIEKLGGVMAGCAFLVELDELNGREKIGDYDYKVLMHY</sequence>
<dbReference type="EC" id="2.4.2.7" evidence="1"/>
<dbReference type="EMBL" id="AE007317">
    <property type="protein sequence ID" value="AAL00239.1"/>
    <property type="status" value="ALT_INIT"/>
    <property type="molecule type" value="Genomic_DNA"/>
</dbReference>
<dbReference type="PIR" id="B98051">
    <property type="entry name" value="B98051"/>
</dbReference>
<dbReference type="RefSeq" id="NP_359028.1">
    <property type="nucleotide sequence ID" value="NC_003098.1"/>
</dbReference>
<dbReference type="RefSeq" id="WP_001049323.1">
    <property type="nucleotide sequence ID" value="NC_003098.1"/>
</dbReference>
<dbReference type="SMR" id="P63545"/>
<dbReference type="STRING" id="171101.spr1435"/>
<dbReference type="KEGG" id="spr:spr1435"/>
<dbReference type="PATRIC" id="fig|171101.6.peg.1550"/>
<dbReference type="eggNOG" id="COG0503">
    <property type="taxonomic scope" value="Bacteria"/>
</dbReference>
<dbReference type="HOGENOM" id="CLU_063339_3_0_9"/>
<dbReference type="UniPathway" id="UPA00588">
    <property type="reaction ID" value="UER00646"/>
</dbReference>
<dbReference type="Proteomes" id="UP000000586">
    <property type="component" value="Chromosome"/>
</dbReference>
<dbReference type="GO" id="GO:0005737">
    <property type="term" value="C:cytoplasm"/>
    <property type="evidence" value="ECO:0000318"/>
    <property type="project" value="GO_Central"/>
</dbReference>
<dbReference type="GO" id="GO:0002055">
    <property type="term" value="F:adenine binding"/>
    <property type="evidence" value="ECO:0000318"/>
    <property type="project" value="GO_Central"/>
</dbReference>
<dbReference type="GO" id="GO:0003999">
    <property type="term" value="F:adenine phosphoribosyltransferase activity"/>
    <property type="evidence" value="ECO:0000318"/>
    <property type="project" value="GO_Central"/>
</dbReference>
<dbReference type="GO" id="GO:0016208">
    <property type="term" value="F:AMP binding"/>
    <property type="evidence" value="ECO:0000318"/>
    <property type="project" value="GO_Central"/>
</dbReference>
<dbReference type="GO" id="GO:0006168">
    <property type="term" value="P:adenine salvage"/>
    <property type="evidence" value="ECO:0000318"/>
    <property type="project" value="GO_Central"/>
</dbReference>
<dbReference type="GO" id="GO:0044209">
    <property type="term" value="P:AMP salvage"/>
    <property type="evidence" value="ECO:0000318"/>
    <property type="project" value="GO_Central"/>
</dbReference>
<dbReference type="GO" id="GO:0006166">
    <property type="term" value="P:purine ribonucleoside salvage"/>
    <property type="evidence" value="ECO:0007669"/>
    <property type="project" value="UniProtKB-KW"/>
</dbReference>
<dbReference type="CDD" id="cd06223">
    <property type="entry name" value="PRTases_typeI"/>
    <property type="match status" value="1"/>
</dbReference>
<dbReference type="FunFam" id="3.40.50.2020:FF:000004">
    <property type="entry name" value="Adenine phosphoribosyltransferase"/>
    <property type="match status" value="1"/>
</dbReference>
<dbReference type="Gene3D" id="3.40.50.2020">
    <property type="match status" value="1"/>
</dbReference>
<dbReference type="HAMAP" id="MF_00004">
    <property type="entry name" value="Aden_phosphoribosyltr"/>
    <property type="match status" value="1"/>
</dbReference>
<dbReference type="InterPro" id="IPR005764">
    <property type="entry name" value="Ade_phspho_trans"/>
</dbReference>
<dbReference type="InterPro" id="IPR000836">
    <property type="entry name" value="PRibTrfase_dom"/>
</dbReference>
<dbReference type="InterPro" id="IPR029057">
    <property type="entry name" value="PRTase-like"/>
</dbReference>
<dbReference type="InterPro" id="IPR050054">
    <property type="entry name" value="UPRTase/APRTase"/>
</dbReference>
<dbReference type="NCBIfam" id="TIGR01090">
    <property type="entry name" value="apt"/>
    <property type="match status" value="1"/>
</dbReference>
<dbReference type="NCBIfam" id="NF002633">
    <property type="entry name" value="PRK02304.1-2"/>
    <property type="match status" value="1"/>
</dbReference>
<dbReference type="NCBIfam" id="NF002634">
    <property type="entry name" value="PRK02304.1-3"/>
    <property type="match status" value="1"/>
</dbReference>
<dbReference type="NCBIfam" id="NF002636">
    <property type="entry name" value="PRK02304.1-5"/>
    <property type="match status" value="1"/>
</dbReference>
<dbReference type="PANTHER" id="PTHR32315">
    <property type="entry name" value="ADENINE PHOSPHORIBOSYLTRANSFERASE"/>
    <property type="match status" value="1"/>
</dbReference>
<dbReference type="PANTHER" id="PTHR32315:SF3">
    <property type="entry name" value="ADENINE PHOSPHORIBOSYLTRANSFERASE"/>
    <property type="match status" value="1"/>
</dbReference>
<dbReference type="Pfam" id="PF00156">
    <property type="entry name" value="Pribosyltran"/>
    <property type="match status" value="1"/>
</dbReference>
<dbReference type="SUPFAM" id="SSF53271">
    <property type="entry name" value="PRTase-like"/>
    <property type="match status" value="1"/>
</dbReference>
<dbReference type="PROSITE" id="PS00103">
    <property type="entry name" value="PUR_PYR_PR_TRANSFER"/>
    <property type="match status" value="1"/>
</dbReference>
<comment type="function">
    <text evidence="1">Catalyzes a salvage reaction resulting in the formation of AMP, that is energically less costly than de novo synthesis.</text>
</comment>
<comment type="catalytic activity">
    <reaction evidence="1">
        <text>AMP + diphosphate = 5-phospho-alpha-D-ribose 1-diphosphate + adenine</text>
        <dbReference type="Rhea" id="RHEA:16609"/>
        <dbReference type="ChEBI" id="CHEBI:16708"/>
        <dbReference type="ChEBI" id="CHEBI:33019"/>
        <dbReference type="ChEBI" id="CHEBI:58017"/>
        <dbReference type="ChEBI" id="CHEBI:456215"/>
        <dbReference type="EC" id="2.4.2.7"/>
    </reaction>
</comment>
<comment type="pathway">
    <text evidence="1">Purine metabolism; AMP biosynthesis via salvage pathway; AMP from adenine: step 1/1.</text>
</comment>
<comment type="subunit">
    <text evidence="1">Homodimer.</text>
</comment>
<comment type="subcellular location">
    <subcellularLocation>
        <location evidence="1">Cytoplasm</location>
    </subcellularLocation>
</comment>
<comment type="similarity">
    <text evidence="1">Belongs to the purine/pyrimidine phosphoribosyltransferase family.</text>
</comment>
<comment type="sequence caution" evidence="2">
    <conflict type="erroneous initiation">
        <sequence resource="EMBL-CDS" id="AAL00239"/>
    </conflict>
</comment>
<accession>P63545</accession>
<accession>Q97PM8</accession>
<feature type="chain" id="PRO_0000149466" description="Adenine phosphoribosyltransferase">
    <location>
        <begin position="1"/>
        <end position="170"/>
    </location>
</feature>
<reference key="1">
    <citation type="journal article" date="2001" name="J. Bacteriol.">
        <title>Genome of the bacterium Streptococcus pneumoniae strain R6.</title>
        <authorList>
            <person name="Hoskins J."/>
            <person name="Alborn W.E. Jr."/>
            <person name="Arnold J."/>
            <person name="Blaszczak L.C."/>
            <person name="Burgett S."/>
            <person name="DeHoff B.S."/>
            <person name="Estrem S.T."/>
            <person name="Fritz L."/>
            <person name="Fu D.-J."/>
            <person name="Fuller W."/>
            <person name="Geringer C."/>
            <person name="Gilmour R."/>
            <person name="Glass J.S."/>
            <person name="Khoja H."/>
            <person name="Kraft A.R."/>
            <person name="Lagace R.E."/>
            <person name="LeBlanc D.J."/>
            <person name="Lee L.N."/>
            <person name="Lefkowitz E.J."/>
            <person name="Lu J."/>
            <person name="Matsushima P."/>
            <person name="McAhren S.M."/>
            <person name="McHenney M."/>
            <person name="McLeaster K."/>
            <person name="Mundy C.W."/>
            <person name="Nicas T.I."/>
            <person name="Norris F.H."/>
            <person name="O'Gara M."/>
            <person name="Peery R.B."/>
            <person name="Robertson G.T."/>
            <person name="Rockey P."/>
            <person name="Sun P.-M."/>
            <person name="Winkler M.E."/>
            <person name="Yang Y."/>
            <person name="Young-Bellido M."/>
            <person name="Zhao G."/>
            <person name="Zook C.A."/>
            <person name="Baltz R.H."/>
            <person name="Jaskunas S.R."/>
            <person name="Rosteck P.R. Jr."/>
            <person name="Skatrud P.L."/>
            <person name="Glass J.I."/>
        </authorList>
    </citation>
    <scope>NUCLEOTIDE SEQUENCE [LARGE SCALE GENOMIC DNA]</scope>
    <source>
        <strain>ATCC BAA-255 / R6</strain>
    </source>
</reference>
<evidence type="ECO:0000255" key="1">
    <source>
        <dbReference type="HAMAP-Rule" id="MF_00004"/>
    </source>
</evidence>
<evidence type="ECO:0000305" key="2"/>
<keyword id="KW-0963">Cytoplasm</keyword>
<keyword id="KW-0328">Glycosyltransferase</keyword>
<keyword id="KW-0660">Purine salvage</keyword>
<keyword id="KW-1185">Reference proteome</keyword>
<keyword id="KW-0808">Transferase</keyword>
<organism>
    <name type="scientific">Streptococcus pneumoniae (strain ATCC BAA-255 / R6)</name>
    <dbReference type="NCBI Taxonomy" id="171101"/>
    <lineage>
        <taxon>Bacteria</taxon>
        <taxon>Bacillati</taxon>
        <taxon>Bacillota</taxon>
        <taxon>Bacilli</taxon>
        <taxon>Lactobacillales</taxon>
        <taxon>Streptococcaceae</taxon>
        <taxon>Streptococcus</taxon>
    </lineage>
</organism>
<gene>
    <name evidence="1" type="primary">apt</name>
    <name type="ordered locus">spr1435</name>
</gene>
<name>APT_STRR6</name>
<proteinExistence type="inferred from homology"/>
<protein>
    <recommendedName>
        <fullName evidence="1">Adenine phosphoribosyltransferase</fullName>
        <shortName evidence="1">APRT</shortName>
        <ecNumber evidence="1">2.4.2.7</ecNumber>
    </recommendedName>
</protein>